<keyword id="KW-0413">Isomerase</keyword>
<keyword id="KW-0456">Lyase</keyword>
<keyword id="KW-0460">Magnesium</keyword>
<keyword id="KW-0479">Metal-binding</keyword>
<dbReference type="EC" id="4.2.3.19"/>
<dbReference type="EC" id="5.5.1.13"/>
<dbReference type="EMBL" id="AB013295">
    <property type="protein sequence ID" value="BAA84917.1"/>
    <property type="molecule type" value="mRNA"/>
</dbReference>
<dbReference type="EMBL" id="Y15013">
    <property type="protein sequence ID" value="CAA75244.1"/>
    <property type="status" value="ALT_SEQ"/>
    <property type="molecule type" value="Genomic_DNA"/>
</dbReference>
<dbReference type="PIR" id="JC7227">
    <property type="entry name" value="JC7227"/>
</dbReference>
<dbReference type="SMR" id="Q9UVY5"/>
<dbReference type="KEGG" id="ag:BAA84917"/>
<dbReference type="eggNOG" id="ENOG502QQN6">
    <property type="taxonomic scope" value="Eukaryota"/>
</dbReference>
<dbReference type="BioCyc" id="MetaCyc:MONOMER-15973"/>
<dbReference type="BRENDA" id="4.2.3.19">
    <property type="organism ID" value="2425"/>
</dbReference>
<dbReference type="BRENDA" id="5.5.1.13">
    <property type="organism ID" value="2425"/>
</dbReference>
<dbReference type="UniPathway" id="UPA00390"/>
<dbReference type="GO" id="GO:0009905">
    <property type="term" value="F:ent-copalyl diphosphate synthase activity"/>
    <property type="evidence" value="ECO:0007669"/>
    <property type="project" value="UniProtKB-EC"/>
</dbReference>
<dbReference type="GO" id="GO:0009899">
    <property type="term" value="F:ent-kaurene synthase activity"/>
    <property type="evidence" value="ECO:0007669"/>
    <property type="project" value="UniProtKB-EC"/>
</dbReference>
<dbReference type="GO" id="GO:0000287">
    <property type="term" value="F:magnesium ion binding"/>
    <property type="evidence" value="ECO:0007669"/>
    <property type="project" value="TreeGrafter"/>
</dbReference>
<dbReference type="GO" id="GO:0009686">
    <property type="term" value="P:gibberellin biosynthetic process"/>
    <property type="evidence" value="ECO:0007669"/>
    <property type="project" value="UniProtKB-UniPathway"/>
</dbReference>
<dbReference type="Gene3D" id="1.50.10.160">
    <property type="match status" value="1"/>
</dbReference>
<dbReference type="Gene3D" id="1.50.10.20">
    <property type="match status" value="1"/>
</dbReference>
<dbReference type="InterPro" id="IPR017057">
    <property type="entry name" value="Ent-kaurene_synthase_fun"/>
</dbReference>
<dbReference type="InterPro" id="IPR050148">
    <property type="entry name" value="Terpene_synthase-like"/>
</dbReference>
<dbReference type="InterPro" id="IPR008930">
    <property type="entry name" value="Terpenoid_cyclase/PrenylTrfase"/>
</dbReference>
<dbReference type="PANTHER" id="PTHR31739:SF25">
    <property type="entry name" value="(E,E)-GERANYLLINALOOL SYNTHASE"/>
    <property type="match status" value="1"/>
</dbReference>
<dbReference type="PANTHER" id="PTHR31739">
    <property type="entry name" value="ENT-COPALYL DIPHOSPHATE SYNTHASE, CHLOROPLASTIC"/>
    <property type="match status" value="1"/>
</dbReference>
<dbReference type="PIRSF" id="PIRSF036498">
    <property type="entry name" value="Ent-kaurene_synthase_fungi"/>
    <property type="match status" value="1"/>
</dbReference>
<dbReference type="SUPFAM" id="SSF48239">
    <property type="entry name" value="Terpenoid cyclases/Protein prenyltransferases"/>
    <property type="match status" value="1"/>
</dbReference>
<evidence type="ECO:0000250" key="1">
    <source>
        <dbReference type="UniProtKB" id="Q40577"/>
    </source>
</evidence>
<evidence type="ECO:0000305" key="2"/>
<organism>
    <name type="scientific">Fusarium fujikuroi</name>
    <name type="common">Bakanae and foot rot disease fungus</name>
    <name type="synonym">Gibberella fujikuroi</name>
    <dbReference type="NCBI Taxonomy" id="5127"/>
    <lineage>
        <taxon>Eukaryota</taxon>
        <taxon>Fungi</taxon>
        <taxon>Dikarya</taxon>
        <taxon>Ascomycota</taxon>
        <taxon>Pezizomycotina</taxon>
        <taxon>Sordariomycetes</taxon>
        <taxon>Hypocreomycetidae</taxon>
        <taxon>Hypocreales</taxon>
        <taxon>Nectriaceae</taxon>
        <taxon>Fusarium</taxon>
        <taxon>Fusarium fujikuroi species complex</taxon>
    </lineage>
</organism>
<gene>
    <name type="primary">cps</name>
</gene>
<accession>Q9UVY5</accession>
<accession>O74290</accession>
<proteinExistence type="evidence at transcript level"/>
<comment type="function">
    <text>Catalyzes the conversion of geranylgeranyl diphosphate to the gibberellin precursor ent-kaurene diphosphate in a two step process.</text>
</comment>
<comment type="catalytic activity">
    <reaction>
        <text>ent-copalyl diphosphate = ent-kaur-16-ene + diphosphate</text>
        <dbReference type="Rhea" id="RHEA:22220"/>
        <dbReference type="ChEBI" id="CHEBI:15415"/>
        <dbReference type="ChEBI" id="CHEBI:33019"/>
        <dbReference type="ChEBI" id="CHEBI:58553"/>
        <dbReference type="EC" id="4.2.3.19"/>
    </reaction>
</comment>
<comment type="catalytic activity">
    <reaction>
        <text>(2E,6E,10E)-geranylgeranyl diphosphate = ent-copalyl diphosphate</text>
        <dbReference type="Rhea" id="RHEA:14841"/>
        <dbReference type="ChEBI" id="CHEBI:58553"/>
        <dbReference type="ChEBI" id="CHEBI:58756"/>
        <dbReference type="EC" id="5.5.1.13"/>
    </reaction>
</comment>
<comment type="cofactor">
    <cofactor evidence="1">
        <name>Mg(2+)</name>
        <dbReference type="ChEBI" id="CHEBI:18420"/>
    </cofactor>
</comment>
<comment type="pathway">
    <text>Plant hormone biosynthesis; gibberellin biosynthesis.</text>
</comment>
<comment type="domain">
    <text>The Asp-Asp-Xaa-Xaa-Asp/Glu (DDXXD/E) motif is important for the catalytic activity, presumably through binding to Mg(2+).</text>
</comment>
<comment type="similarity">
    <text evidence="2">Belongs to the terpene synthase family.</text>
</comment>
<comment type="sequence caution" evidence="2">
    <conflict type="erroneous gene model prediction">
        <sequence resource="EMBL-CDS" id="CAA75244"/>
    </conflict>
</comment>
<protein>
    <recommendedName>
        <fullName>Ent-kaur-16-ene synthase</fullName>
        <ecNumber>4.2.3.19</ecNumber>
        <ecNumber>5.5.1.13</ecNumber>
    </recommendedName>
    <alternativeName>
        <fullName>CPS/KS</fullName>
    </alternativeName>
    <alternativeName>
        <fullName>Ent-copalyl diphosphate synthase</fullName>
    </alternativeName>
    <alternativeName>
        <fullName>Ent-kaurene synthase</fullName>
    </alternativeName>
    <alternativeName>
        <fullName>GfCPS/KS</fullName>
    </alternativeName>
</protein>
<name>CPSKS_FUSFU</name>
<reference key="1">
    <citation type="journal article" date="2000" name="Biosci. Biotechnol. Biochem.">
        <title>Cloning of a full-length cDNA encoding ent-kaurene synthase from Gibberella fujikuroi: functional analysis of a bifunctional diterpene cyclase.</title>
        <authorList>
            <person name="Toyomasu T."/>
            <person name="Kawaide H."/>
            <person name="Ishizaki A."/>
            <person name="Shinoda S."/>
            <person name="Otsuka M."/>
            <person name="Mitsuhashi W."/>
            <person name="Sassa T."/>
        </authorList>
    </citation>
    <scope>NUCLEOTIDE SEQUENCE [MRNA]</scope>
    <source>
        <strain>NBRC 30336</strain>
    </source>
</reference>
<reference key="2">
    <citation type="journal article" date="1998" name="Curr. Genet.">
        <title>Gibberellin biosynthesis in Gibberella fujikuroi: cloning and characterization of the copalyl diphosphate synthase gene.</title>
        <authorList>
            <person name="Tudzynski B."/>
            <person name="Kawaide H."/>
            <person name="Kamiya Y."/>
        </authorList>
    </citation>
    <scope>NUCLEOTIDE SEQUENCE [GENOMIC DNA]</scope>
    <source>
        <strain>m567</strain>
        <tissue>Mycelium</tissue>
    </source>
</reference>
<sequence>MPGKIENGTPKDLKTGNDFVSAAKSLLDRAFKSHHSYYGLCSTSCQVYDTAWVAMIPKTRDNVKQWLFPECFHYLLKTQAADGSWGSLPTTQTAGILDTASAVLALLCHAQEPLQILDVSPDEMGLRIEHGVTSLKRQLAVWNDVEDTNHIGVEFIIPALLSMLEKELDVPSFEFPCRSILERMHGEKLGHFDLEQVYGKPSSLLHSLEAFLGKLDFDRLSHHLYHGSMMASPSSTAAYLIGATKWDDEAEDYLRHVMRNGAGHGNGGISGTFPTTHFECSWIIATLLKVGFTLKQIDGDGLRGLSTILLEALRDENGVIGFAPRTADVDDTAKALLALSLVNQPVSPDIMIKVFEGKDHFTTFGSERDPSLTSNLHVLLSLLKQSNLSQYHPQILKTTLFTCRWWWGSDHCVKDKWNLSHLYPTMLLVEAFTEVLHLIDGGELSSLFDESFKCKIGLSIFQAVLRIILTQDNDGSWRGYREQTCYAILALVQARHVCFFTHMVDRLQSCVDRGFSWLKSCSFHSQDLTWTSKTAYEVGFVAEAYKLAALQSASLEVPAATIGHSVTSAVPSSDLEKYMRLVRKTALFSPLDEWGLMASIIESSFFVPLLQAQRVEIYPRDNIKVDEDKYLSIIPFTWVGCNNRSRTFASNRWLYDMMYLSLLGYQTDEYMEAVAGPVFGDVSLLHQTIDKVIDNTMGNLARANGTVHSGNGHQHESPNIGQVEDTLTRFTNSVLNHKDVLNSSSSDQDTLRREFRTFMHAHITQIEDNSRFSKQASSDAFSSPEQSYFQWVNSTGGSHVACAYSFAFSNCLMSANLLQGKDAFPSGTQKYLISSVMRHATNMCRMYNDFGSIARDNAERNVNSIHFPEFTLCNGTSQNLDERKERLLKIATYEQGYLDRALEALERQSRDDAGDRAGSKDMRKLKIVKLFCDVTDLYDQLYVIKDLSSSMK</sequence>
<feature type="chain" id="PRO_0000186444" description="Ent-kaur-16-ene synthase">
    <location>
        <begin position="1"/>
        <end position="952"/>
    </location>
</feature>
<feature type="short sequence motif" description="DEXXE motif" evidence="2">
    <location>
        <begin position="668"/>
        <end position="672"/>
    </location>
</feature>
<feature type="binding site" evidence="1">
    <location>
        <position position="668"/>
    </location>
    <ligand>
        <name>Mg(2+)</name>
        <dbReference type="ChEBI" id="CHEBI:18420"/>
        <label>1</label>
    </ligand>
</feature>
<feature type="binding site" evidence="1">
    <location>
        <position position="668"/>
    </location>
    <ligand>
        <name>Mg(2+)</name>
        <dbReference type="ChEBI" id="CHEBI:18420"/>
        <label>2</label>
    </ligand>
</feature>
<feature type="binding site" evidence="1">
    <location>
        <position position="672"/>
    </location>
    <ligand>
        <name>Mg(2+)</name>
        <dbReference type="ChEBI" id="CHEBI:18420"/>
        <label>1</label>
    </ligand>
</feature>
<feature type="binding site" evidence="1">
    <location>
        <position position="672"/>
    </location>
    <ligand>
        <name>Mg(2+)</name>
        <dbReference type="ChEBI" id="CHEBI:18420"/>
        <label>2</label>
    </ligand>
</feature>
<feature type="binding site" evidence="1">
    <location>
        <position position="848"/>
    </location>
    <ligand>
        <name>Mg(2+)</name>
        <dbReference type="ChEBI" id="CHEBI:18420"/>
        <label>3</label>
    </ligand>
</feature>
<feature type="binding site" evidence="1">
    <location>
        <position position="849"/>
    </location>
    <ligand>
        <name>Mg(2+)</name>
        <dbReference type="ChEBI" id="CHEBI:18420"/>
        <label>3</label>
    </ligand>
</feature>
<feature type="binding site" evidence="1">
    <location>
        <position position="852"/>
    </location>
    <ligand>
        <name>Mg(2+)</name>
        <dbReference type="ChEBI" id="CHEBI:18420"/>
        <label>3</label>
    </ligand>
</feature>
<feature type="binding site" evidence="1">
    <location>
        <position position="856"/>
    </location>
    <ligand>
        <name>Mg(2+)</name>
        <dbReference type="ChEBI" id="CHEBI:18420"/>
        <label>3</label>
    </ligand>
</feature>